<feature type="chain" id="PRO_0000162324" description="UPF0060 membrane protein BH2744">
    <location>
        <begin position="1"/>
        <end position="108"/>
    </location>
</feature>
<feature type="transmembrane region" description="Helical" evidence="1">
    <location>
        <begin position="6"/>
        <end position="26"/>
    </location>
</feature>
<feature type="transmembrane region" description="Helical" evidence="1">
    <location>
        <begin position="31"/>
        <end position="51"/>
    </location>
</feature>
<feature type="transmembrane region" description="Helical" evidence="1">
    <location>
        <begin position="60"/>
        <end position="80"/>
    </location>
</feature>
<feature type="transmembrane region" description="Helical" evidence="1">
    <location>
        <begin position="86"/>
        <end position="106"/>
    </location>
</feature>
<accession>Q9K9A5</accession>
<organism>
    <name type="scientific">Halalkalibacterium halodurans (strain ATCC BAA-125 / DSM 18197 / FERM 7344 / JCM 9153 / C-125)</name>
    <name type="common">Bacillus halodurans</name>
    <dbReference type="NCBI Taxonomy" id="272558"/>
    <lineage>
        <taxon>Bacteria</taxon>
        <taxon>Bacillati</taxon>
        <taxon>Bacillota</taxon>
        <taxon>Bacilli</taxon>
        <taxon>Bacillales</taxon>
        <taxon>Bacillaceae</taxon>
        <taxon>Halalkalibacterium (ex Joshi et al. 2022)</taxon>
    </lineage>
</organism>
<reference key="1">
    <citation type="journal article" date="2000" name="Nucleic Acids Res.">
        <title>Complete genome sequence of the alkaliphilic bacterium Bacillus halodurans and genomic sequence comparison with Bacillus subtilis.</title>
        <authorList>
            <person name="Takami H."/>
            <person name="Nakasone K."/>
            <person name="Takaki Y."/>
            <person name="Maeno G."/>
            <person name="Sasaki R."/>
            <person name="Masui N."/>
            <person name="Fuji F."/>
            <person name="Hirama C."/>
            <person name="Nakamura Y."/>
            <person name="Ogasawara N."/>
            <person name="Kuhara S."/>
            <person name="Horikoshi K."/>
        </authorList>
    </citation>
    <scope>NUCLEOTIDE SEQUENCE [LARGE SCALE GENOMIC DNA]</scope>
    <source>
        <strain>ATCC BAA-125 / DSM 18197 / FERM 7344 / JCM 9153 / C-125</strain>
    </source>
</reference>
<dbReference type="EMBL" id="BA000004">
    <property type="protein sequence ID" value="BAB06463.1"/>
    <property type="molecule type" value="Genomic_DNA"/>
</dbReference>
<dbReference type="PIR" id="H83992">
    <property type="entry name" value="H83992"/>
</dbReference>
<dbReference type="RefSeq" id="WP_010898892.1">
    <property type="nucleotide sequence ID" value="NC_002570.2"/>
</dbReference>
<dbReference type="SMR" id="Q9K9A5"/>
<dbReference type="STRING" id="272558.gene:10728643"/>
<dbReference type="DNASU" id="893504"/>
<dbReference type="GeneID" id="87598249"/>
<dbReference type="KEGG" id="bha:BH2744"/>
<dbReference type="eggNOG" id="COG1742">
    <property type="taxonomic scope" value="Bacteria"/>
</dbReference>
<dbReference type="HOGENOM" id="CLU_117653_0_1_9"/>
<dbReference type="OrthoDB" id="123240at2"/>
<dbReference type="Proteomes" id="UP000001258">
    <property type="component" value="Chromosome"/>
</dbReference>
<dbReference type="GO" id="GO:0005886">
    <property type="term" value="C:plasma membrane"/>
    <property type="evidence" value="ECO:0007669"/>
    <property type="project" value="UniProtKB-SubCell"/>
</dbReference>
<dbReference type="HAMAP" id="MF_00010">
    <property type="entry name" value="UPF0060"/>
    <property type="match status" value="1"/>
</dbReference>
<dbReference type="InterPro" id="IPR003844">
    <property type="entry name" value="UPF0060"/>
</dbReference>
<dbReference type="NCBIfam" id="NF002586">
    <property type="entry name" value="PRK02237.1"/>
    <property type="match status" value="1"/>
</dbReference>
<dbReference type="PANTHER" id="PTHR36116">
    <property type="entry name" value="UPF0060 MEMBRANE PROTEIN YNFA"/>
    <property type="match status" value="1"/>
</dbReference>
<dbReference type="PANTHER" id="PTHR36116:SF1">
    <property type="entry name" value="UPF0060 MEMBRANE PROTEIN YNFA"/>
    <property type="match status" value="1"/>
</dbReference>
<dbReference type="Pfam" id="PF02694">
    <property type="entry name" value="UPF0060"/>
    <property type="match status" value="1"/>
</dbReference>
<dbReference type="SUPFAM" id="SSF103481">
    <property type="entry name" value="Multidrug resistance efflux transporter EmrE"/>
    <property type="match status" value="1"/>
</dbReference>
<keyword id="KW-1003">Cell membrane</keyword>
<keyword id="KW-0472">Membrane</keyword>
<keyword id="KW-1185">Reference proteome</keyword>
<keyword id="KW-0812">Transmembrane</keyword>
<keyword id="KW-1133">Transmembrane helix</keyword>
<evidence type="ECO:0000255" key="1">
    <source>
        <dbReference type="HAMAP-Rule" id="MF_00010"/>
    </source>
</evidence>
<comment type="subcellular location">
    <subcellularLocation>
        <location evidence="1">Cell membrane</location>
        <topology evidence="1">Multi-pass membrane protein</topology>
    </subcellularLocation>
</comment>
<comment type="similarity">
    <text evidence="1">Belongs to the UPF0060 family.</text>
</comment>
<proteinExistence type="inferred from homology"/>
<protein>
    <recommendedName>
        <fullName evidence="1">UPF0060 membrane protein BH2744</fullName>
    </recommendedName>
</protein>
<name>Y2744_HALH5</name>
<sequence>MVMATTLFLLAGLAEIGGGYLIWLWLRDGKPVYLGLFGAVALALYGVIATFQAFPSFGRVYAAYGGVFIFLAVLWGWWIDGKAPDTYDWIGAVICLVGVGIMLWAPRP</sequence>
<gene>
    <name type="ordered locus">BH2744</name>
</gene>